<accession>Q4UZF9</accession>
<feature type="chain" id="PRO_0000227198" description="Anthranilate phosphoribosyltransferase">
    <location>
        <begin position="1"/>
        <end position="345"/>
    </location>
</feature>
<feature type="binding site" evidence="1">
    <location>
        <position position="84"/>
    </location>
    <ligand>
        <name>5-phospho-alpha-D-ribose 1-diphosphate</name>
        <dbReference type="ChEBI" id="CHEBI:58017"/>
    </ligand>
</feature>
<feature type="binding site" evidence="1">
    <location>
        <position position="84"/>
    </location>
    <ligand>
        <name>anthranilate</name>
        <dbReference type="ChEBI" id="CHEBI:16567"/>
        <label>1</label>
    </ligand>
</feature>
<feature type="binding site" evidence="1">
    <location>
        <begin position="87"/>
        <end position="88"/>
    </location>
    <ligand>
        <name>5-phospho-alpha-D-ribose 1-diphosphate</name>
        <dbReference type="ChEBI" id="CHEBI:58017"/>
    </ligand>
</feature>
<feature type="binding site" evidence="1">
    <location>
        <position position="92"/>
    </location>
    <ligand>
        <name>5-phospho-alpha-D-ribose 1-diphosphate</name>
        <dbReference type="ChEBI" id="CHEBI:58017"/>
    </ligand>
</feature>
<feature type="binding site" evidence="1">
    <location>
        <begin position="94"/>
        <end position="97"/>
    </location>
    <ligand>
        <name>5-phospho-alpha-D-ribose 1-diphosphate</name>
        <dbReference type="ChEBI" id="CHEBI:58017"/>
    </ligand>
</feature>
<feature type="binding site" evidence="1">
    <location>
        <position position="96"/>
    </location>
    <ligand>
        <name>Mg(2+)</name>
        <dbReference type="ChEBI" id="CHEBI:18420"/>
        <label>1</label>
    </ligand>
</feature>
<feature type="binding site" evidence="1">
    <location>
        <begin position="112"/>
        <end position="120"/>
    </location>
    <ligand>
        <name>5-phospho-alpha-D-ribose 1-diphosphate</name>
        <dbReference type="ChEBI" id="CHEBI:58017"/>
    </ligand>
</feature>
<feature type="binding site" evidence="1">
    <location>
        <position position="115"/>
    </location>
    <ligand>
        <name>anthranilate</name>
        <dbReference type="ChEBI" id="CHEBI:16567"/>
        <label>1</label>
    </ligand>
</feature>
<feature type="binding site" evidence="1">
    <location>
        <position position="124"/>
    </location>
    <ligand>
        <name>5-phospho-alpha-D-ribose 1-diphosphate</name>
        <dbReference type="ChEBI" id="CHEBI:58017"/>
    </ligand>
</feature>
<feature type="binding site" evidence="1">
    <location>
        <position position="170"/>
    </location>
    <ligand>
        <name>anthranilate</name>
        <dbReference type="ChEBI" id="CHEBI:16567"/>
        <label>2</label>
    </ligand>
</feature>
<feature type="binding site" evidence="1">
    <location>
        <position position="229"/>
    </location>
    <ligand>
        <name>Mg(2+)</name>
        <dbReference type="ChEBI" id="CHEBI:18420"/>
        <label>2</label>
    </ligand>
</feature>
<feature type="binding site" evidence="1">
    <location>
        <position position="230"/>
    </location>
    <ligand>
        <name>Mg(2+)</name>
        <dbReference type="ChEBI" id="CHEBI:18420"/>
        <label>1</label>
    </ligand>
</feature>
<feature type="binding site" evidence="1">
    <location>
        <position position="230"/>
    </location>
    <ligand>
        <name>Mg(2+)</name>
        <dbReference type="ChEBI" id="CHEBI:18420"/>
        <label>2</label>
    </ligand>
</feature>
<name>TRPD_XANC8</name>
<keyword id="KW-0028">Amino-acid biosynthesis</keyword>
<keyword id="KW-0057">Aromatic amino acid biosynthesis</keyword>
<keyword id="KW-0328">Glycosyltransferase</keyword>
<keyword id="KW-0460">Magnesium</keyword>
<keyword id="KW-0479">Metal-binding</keyword>
<keyword id="KW-0808">Transferase</keyword>
<keyword id="KW-0822">Tryptophan biosynthesis</keyword>
<proteinExistence type="inferred from homology"/>
<gene>
    <name evidence="1" type="primary">trpD</name>
    <name type="ordered locus">XC_0483</name>
</gene>
<dbReference type="EC" id="2.4.2.18" evidence="1"/>
<dbReference type="EMBL" id="CP000050">
    <property type="protein sequence ID" value="AAY47564.1"/>
    <property type="molecule type" value="Genomic_DNA"/>
</dbReference>
<dbReference type="RefSeq" id="WP_011035722.1">
    <property type="nucleotide sequence ID" value="NZ_CP155948.1"/>
</dbReference>
<dbReference type="SMR" id="Q4UZF9"/>
<dbReference type="DNASU" id="998756"/>
<dbReference type="KEGG" id="xcb:XC_0483"/>
<dbReference type="HOGENOM" id="CLU_034315_2_1_6"/>
<dbReference type="UniPathway" id="UPA00035">
    <property type="reaction ID" value="UER00041"/>
</dbReference>
<dbReference type="Proteomes" id="UP000000420">
    <property type="component" value="Chromosome"/>
</dbReference>
<dbReference type="GO" id="GO:0005829">
    <property type="term" value="C:cytosol"/>
    <property type="evidence" value="ECO:0007669"/>
    <property type="project" value="TreeGrafter"/>
</dbReference>
<dbReference type="GO" id="GO:0004048">
    <property type="term" value="F:anthranilate phosphoribosyltransferase activity"/>
    <property type="evidence" value="ECO:0007669"/>
    <property type="project" value="UniProtKB-UniRule"/>
</dbReference>
<dbReference type="GO" id="GO:0000287">
    <property type="term" value="F:magnesium ion binding"/>
    <property type="evidence" value="ECO:0007669"/>
    <property type="project" value="UniProtKB-UniRule"/>
</dbReference>
<dbReference type="GO" id="GO:0000162">
    <property type="term" value="P:L-tryptophan biosynthetic process"/>
    <property type="evidence" value="ECO:0007669"/>
    <property type="project" value="UniProtKB-UniRule"/>
</dbReference>
<dbReference type="FunFam" id="1.20.970.10:FF:000006">
    <property type="entry name" value="Anthranilate phosphoribosyltransferase"/>
    <property type="match status" value="1"/>
</dbReference>
<dbReference type="FunFam" id="3.40.1030.10:FF:000002">
    <property type="entry name" value="Anthranilate phosphoribosyltransferase"/>
    <property type="match status" value="1"/>
</dbReference>
<dbReference type="Gene3D" id="3.40.1030.10">
    <property type="entry name" value="Nucleoside phosphorylase/phosphoribosyltransferase catalytic domain"/>
    <property type="match status" value="1"/>
</dbReference>
<dbReference type="Gene3D" id="1.20.970.10">
    <property type="entry name" value="Transferase, Pyrimidine Nucleoside Phosphorylase, Chain C"/>
    <property type="match status" value="1"/>
</dbReference>
<dbReference type="HAMAP" id="MF_00211">
    <property type="entry name" value="TrpD"/>
    <property type="match status" value="1"/>
</dbReference>
<dbReference type="InterPro" id="IPR005940">
    <property type="entry name" value="Anthranilate_Pribosyl_Tfrase"/>
</dbReference>
<dbReference type="InterPro" id="IPR000312">
    <property type="entry name" value="Glycosyl_Trfase_fam3"/>
</dbReference>
<dbReference type="InterPro" id="IPR017459">
    <property type="entry name" value="Glycosyl_Trfase_fam3_N_dom"/>
</dbReference>
<dbReference type="InterPro" id="IPR036320">
    <property type="entry name" value="Glycosyl_Trfase_fam3_N_dom_sf"/>
</dbReference>
<dbReference type="InterPro" id="IPR035902">
    <property type="entry name" value="Nuc_phospho_transferase"/>
</dbReference>
<dbReference type="NCBIfam" id="TIGR01245">
    <property type="entry name" value="trpD"/>
    <property type="match status" value="1"/>
</dbReference>
<dbReference type="PANTHER" id="PTHR43285">
    <property type="entry name" value="ANTHRANILATE PHOSPHORIBOSYLTRANSFERASE"/>
    <property type="match status" value="1"/>
</dbReference>
<dbReference type="PANTHER" id="PTHR43285:SF2">
    <property type="entry name" value="ANTHRANILATE PHOSPHORIBOSYLTRANSFERASE"/>
    <property type="match status" value="1"/>
</dbReference>
<dbReference type="Pfam" id="PF02885">
    <property type="entry name" value="Glycos_trans_3N"/>
    <property type="match status" value="1"/>
</dbReference>
<dbReference type="Pfam" id="PF00591">
    <property type="entry name" value="Glycos_transf_3"/>
    <property type="match status" value="1"/>
</dbReference>
<dbReference type="SUPFAM" id="SSF52418">
    <property type="entry name" value="Nucleoside phosphorylase/phosphoribosyltransferase catalytic domain"/>
    <property type="match status" value="1"/>
</dbReference>
<dbReference type="SUPFAM" id="SSF47648">
    <property type="entry name" value="Nucleoside phosphorylase/phosphoribosyltransferase N-terminal domain"/>
    <property type="match status" value="1"/>
</dbReference>
<sequence>MPITPQQALQRTIEHREIFHDEMVDLMRQIMRGEVSDAMVSAILTGLRVKKETIGEIAGAATVMREFSRRVEVTDRRHMVDIVGTGGDGSHTFNISTCAMFVAAAGGAKVAKHGNRSVSSKSGSADALEALGAVIELQPEQVAASLAQTGIGFMYAPVHHPAMKVVAPVRREMGVRTIFNILGPLTNPAGSPNILMGVFHPDLVGIQARVLQELGAERALVVWGRDGMDELSLGAGTLVGELRDGQVHEYEVHPEDFGIAMSASRNLKVADAAESRAMLLQVLDNVPGPALDIVALNAGAALYVAGVADSIADGIVRARQVLADGSARACLDAYVAFTQQATAQG</sequence>
<reference key="1">
    <citation type="journal article" date="2005" name="Genome Res.">
        <title>Comparative and functional genomic analyses of the pathogenicity of phytopathogen Xanthomonas campestris pv. campestris.</title>
        <authorList>
            <person name="Qian W."/>
            <person name="Jia Y."/>
            <person name="Ren S.-X."/>
            <person name="He Y.-Q."/>
            <person name="Feng J.-X."/>
            <person name="Lu L.-F."/>
            <person name="Sun Q."/>
            <person name="Ying G."/>
            <person name="Tang D.-J."/>
            <person name="Tang H."/>
            <person name="Wu W."/>
            <person name="Hao P."/>
            <person name="Wang L."/>
            <person name="Jiang B.-L."/>
            <person name="Zeng S."/>
            <person name="Gu W.-Y."/>
            <person name="Lu G."/>
            <person name="Rong L."/>
            <person name="Tian Y."/>
            <person name="Yao Z."/>
            <person name="Fu G."/>
            <person name="Chen B."/>
            <person name="Fang R."/>
            <person name="Qiang B."/>
            <person name="Chen Z."/>
            <person name="Zhao G.-P."/>
            <person name="Tang J.-L."/>
            <person name="He C."/>
        </authorList>
    </citation>
    <scope>NUCLEOTIDE SEQUENCE [LARGE SCALE GENOMIC DNA]</scope>
    <source>
        <strain>8004</strain>
    </source>
</reference>
<comment type="function">
    <text evidence="1">Catalyzes the transfer of the phosphoribosyl group of 5-phosphorylribose-1-pyrophosphate (PRPP) to anthranilate to yield N-(5'-phosphoribosyl)-anthranilate (PRA).</text>
</comment>
<comment type="catalytic activity">
    <reaction evidence="1">
        <text>N-(5-phospho-beta-D-ribosyl)anthranilate + diphosphate = 5-phospho-alpha-D-ribose 1-diphosphate + anthranilate</text>
        <dbReference type="Rhea" id="RHEA:11768"/>
        <dbReference type="ChEBI" id="CHEBI:16567"/>
        <dbReference type="ChEBI" id="CHEBI:18277"/>
        <dbReference type="ChEBI" id="CHEBI:33019"/>
        <dbReference type="ChEBI" id="CHEBI:58017"/>
        <dbReference type="EC" id="2.4.2.18"/>
    </reaction>
</comment>
<comment type="cofactor">
    <cofactor evidence="1">
        <name>Mg(2+)</name>
        <dbReference type="ChEBI" id="CHEBI:18420"/>
    </cofactor>
    <text evidence="1">Binds 2 magnesium ions per monomer.</text>
</comment>
<comment type="pathway">
    <text evidence="1">Amino-acid biosynthesis; L-tryptophan biosynthesis; L-tryptophan from chorismate: step 2/5.</text>
</comment>
<comment type="subunit">
    <text evidence="1">Homodimer.</text>
</comment>
<comment type="similarity">
    <text evidence="1">Belongs to the anthranilate phosphoribosyltransferase family.</text>
</comment>
<protein>
    <recommendedName>
        <fullName evidence="1">Anthranilate phosphoribosyltransferase</fullName>
        <ecNumber evidence="1">2.4.2.18</ecNumber>
    </recommendedName>
</protein>
<organism>
    <name type="scientific">Xanthomonas campestris pv. campestris (strain 8004)</name>
    <dbReference type="NCBI Taxonomy" id="314565"/>
    <lineage>
        <taxon>Bacteria</taxon>
        <taxon>Pseudomonadati</taxon>
        <taxon>Pseudomonadota</taxon>
        <taxon>Gammaproteobacteria</taxon>
        <taxon>Lysobacterales</taxon>
        <taxon>Lysobacteraceae</taxon>
        <taxon>Xanthomonas</taxon>
    </lineage>
</organism>
<evidence type="ECO:0000255" key="1">
    <source>
        <dbReference type="HAMAP-Rule" id="MF_00211"/>
    </source>
</evidence>